<reference key="1">
    <citation type="journal article" date="1995" name="Mol. Microbiol.">
        <title>Construction of recombinant neisserial Hsp60 proteins and mapping of antigenic domains.</title>
        <authorList>
            <person name="Pannekoek Y."/>
            <person name="Dankert J."/>
            <person name="van Putten J.P.M."/>
        </authorList>
    </citation>
    <scope>NUCLEOTIDE SEQUENCE [GENOMIC DNA]</scope>
    <source>
        <strain>CCUG 23106 / 2996 / Serogroup B / Serotype 2b</strain>
    </source>
</reference>
<reference key="2">
    <citation type="journal article" date="2000" name="Science">
        <title>Complete genome sequence of Neisseria meningitidis serogroup B strain MC58.</title>
        <authorList>
            <person name="Tettelin H."/>
            <person name="Saunders N.J."/>
            <person name="Heidelberg J.F."/>
            <person name="Jeffries A.C."/>
            <person name="Nelson K.E."/>
            <person name="Eisen J.A."/>
            <person name="Ketchum K.A."/>
            <person name="Hood D.W."/>
            <person name="Peden J.F."/>
            <person name="Dodson R.J."/>
            <person name="Nelson W.C."/>
            <person name="Gwinn M.L."/>
            <person name="DeBoy R.T."/>
            <person name="Peterson J.D."/>
            <person name="Hickey E.K."/>
            <person name="Haft D.H."/>
            <person name="Salzberg S.L."/>
            <person name="White O."/>
            <person name="Fleischmann R.D."/>
            <person name="Dougherty B.A."/>
            <person name="Mason T.M."/>
            <person name="Ciecko A."/>
            <person name="Parksey D.S."/>
            <person name="Blair E."/>
            <person name="Cittone H."/>
            <person name="Clark E.B."/>
            <person name="Cotton M.D."/>
            <person name="Utterback T.R."/>
            <person name="Khouri H.M."/>
            <person name="Qin H."/>
            <person name="Vamathevan J.J."/>
            <person name="Gill J."/>
            <person name="Scarlato V."/>
            <person name="Masignani V."/>
            <person name="Pizza M."/>
            <person name="Grandi G."/>
            <person name="Sun L."/>
            <person name="Smith H.O."/>
            <person name="Fraser C.M."/>
            <person name="Moxon E.R."/>
            <person name="Rappuoli R."/>
            <person name="Venter J.C."/>
        </authorList>
    </citation>
    <scope>NUCLEOTIDE SEQUENCE [LARGE SCALE GENOMIC DNA]</scope>
    <source>
        <strain>ATCC BAA-335 / MC58</strain>
    </source>
</reference>
<reference key="3">
    <citation type="journal article" date="2006" name="Proteomics">
        <title>Proteomic analysis of a meningococcal outer membrane vesicle vaccine prepared from the group B strain NZ98/254.</title>
        <authorList>
            <person name="Vipond C."/>
            <person name="Suker J."/>
            <person name="Jones C."/>
            <person name="Tang C."/>
            <person name="Feavers I.M."/>
            <person name="Wheeler J.X."/>
        </authorList>
    </citation>
    <scope>IDENTIFICATION BY MASS SPECTROMETRY [LARGE SCALE ANALYSIS]</scope>
    <source>
        <strain>NZ98/254 / Serogroup B</strain>
    </source>
</reference>
<name>CH60_NEIMB</name>
<sequence>MAAKDVQFGNEVRQKMVNGVNILANAVRVTLGPKGRNVVVDRAFGGPHITKDGVTVAKEIELKDKFENMGAQMVKEVASKTNDVAGDGTTTATVLAQSIVAEGMKYVTAGMNPTDLKRGIDKAVAALVDELKNIAKPCDTSKEIAQVGSISANSDEQVGAIIAEAMEKVGKEGVITVEDGKSLENELDVVEGMQFDRGYLSPYFINDAEKQIAALDNPFVLLFDKKISNIRDLLPVLEQVAKASRPLLIIAEDVEGEALATLVVNNIRGILKTVAVKAPGFGDRRKAMLQDIAILTGGVVISEEVGLSLEKATLDDLGQAKRIEIGKENTTIIDGFGDAAQIEARVAEIRQQIETATSDYDKEKLQERVAKLAGGVAVIKVGAATEVEMKEKKDRVEDALHATRAAVEEGVVAGGGVALLRARAALENLHTGNADQDAGVQIVLRAVESPLRQIVANAGGEPSVVVNKVLEGKGNYGYNAGSGEYGDMIEMGVLDPAKVTRSALQHAASIAGLMLTTDCMIAEIPEDKPAVPDMGGMGGMGGMM</sequence>
<dbReference type="EC" id="5.6.1.7" evidence="1"/>
<dbReference type="EMBL" id="Z22956">
    <property type="protein sequence ID" value="CAA80532.1"/>
    <property type="molecule type" value="Genomic_DNA"/>
</dbReference>
<dbReference type="EMBL" id="AE002098">
    <property type="protein sequence ID" value="AAF42301.1"/>
    <property type="molecule type" value="Genomic_DNA"/>
</dbReference>
<dbReference type="PIR" id="C81021">
    <property type="entry name" value="C81021"/>
</dbReference>
<dbReference type="PIR" id="S61303">
    <property type="entry name" value="S61303"/>
</dbReference>
<dbReference type="RefSeq" id="NP_274966.1">
    <property type="nucleotide sequence ID" value="NC_003112.2"/>
</dbReference>
<dbReference type="RefSeq" id="WP_002214867.1">
    <property type="nucleotide sequence ID" value="NC_003112.2"/>
</dbReference>
<dbReference type="SMR" id="P42385"/>
<dbReference type="FunCoup" id="P42385">
    <property type="interactions" value="665"/>
</dbReference>
<dbReference type="STRING" id="122586.NMB1972"/>
<dbReference type="PaxDb" id="122586-NMB1972"/>
<dbReference type="KEGG" id="nme:NMB1972"/>
<dbReference type="PATRIC" id="fig|122586.8.peg.2514"/>
<dbReference type="HOGENOM" id="CLU_016503_3_0_4"/>
<dbReference type="InParanoid" id="P42385"/>
<dbReference type="OrthoDB" id="9766614at2"/>
<dbReference type="Proteomes" id="UP000000425">
    <property type="component" value="Chromosome"/>
</dbReference>
<dbReference type="GO" id="GO:1990220">
    <property type="term" value="C:GroEL-GroES complex"/>
    <property type="evidence" value="ECO:0000318"/>
    <property type="project" value="GO_Central"/>
</dbReference>
<dbReference type="GO" id="GO:0005524">
    <property type="term" value="F:ATP binding"/>
    <property type="evidence" value="ECO:0000318"/>
    <property type="project" value="GO_Central"/>
</dbReference>
<dbReference type="GO" id="GO:0140662">
    <property type="term" value="F:ATP-dependent protein folding chaperone"/>
    <property type="evidence" value="ECO:0007669"/>
    <property type="project" value="InterPro"/>
</dbReference>
<dbReference type="GO" id="GO:0016853">
    <property type="term" value="F:isomerase activity"/>
    <property type="evidence" value="ECO:0007669"/>
    <property type="project" value="UniProtKB-KW"/>
</dbReference>
<dbReference type="GO" id="GO:0051082">
    <property type="term" value="F:unfolded protein binding"/>
    <property type="evidence" value="ECO:0000318"/>
    <property type="project" value="GO_Central"/>
</dbReference>
<dbReference type="GO" id="GO:0051085">
    <property type="term" value="P:chaperone cofactor-dependent protein refolding"/>
    <property type="evidence" value="ECO:0000318"/>
    <property type="project" value="GO_Central"/>
</dbReference>
<dbReference type="GO" id="GO:0042026">
    <property type="term" value="P:protein refolding"/>
    <property type="evidence" value="ECO:0007669"/>
    <property type="project" value="UniProtKB-UniRule"/>
</dbReference>
<dbReference type="GO" id="GO:0009408">
    <property type="term" value="P:response to heat"/>
    <property type="evidence" value="ECO:0000318"/>
    <property type="project" value="GO_Central"/>
</dbReference>
<dbReference type="CDD" id="cd03344">
    <property type="entry name" value="GroEL"/>
    <property type="match status" value="1"/>
</dbReference>
<dbReference type="FunFam" id="1.10.560.10:FF:000001">
    <property type="entry name" value="60 kDa chaperonin"/>
    <property type="match status" value="1"/>
</dbReference>
<dbReference type="FunFam" id="3.50.7.10:FF:000001">
    <property type="entry name" value="60 kDa chaperonin"/>
    <property type="match status" value="1"/>
</dbReference>
<dbReference type="Gene3D" id="3.50.7.10">
    <property type="entry name" value="GroEL"/>
    <property type="match status" value="1"/>
</dbReference>
<dbReference type="Gene3D" id="1.10.560.10">
    <property type="entry name" value="GroEL-like equatorial domain"/>
    <property type="match status" value="1"/>
</dbReference>
<dbReference type="Gene3D" id="3.30.260.10">
    <property type="entry name" value="TCP-1-like chaperonin intermediate domain"/>
    <property type="match status" value="1"/>
</dbReference>
<dbReference type="HAMAP" id="MF_00600">
    <property type="entry name" value="CH60"/>
    <property type="match status" value="1"/>
</dbReference>
<dbReference type="InterPro" id="IPR018370">
    <property type="entry name" value="Chaperonin_Cpn60_CS"/>
</dbReference>
<dbReference type="InterPro" id="IPR001844">
    <property type="entry name" value="Cpn60/GroEL"/>
</dbReference>
<dbReference type="InterPro" id="IPR002423">
    <property type="entry name" value="Cpn60/GroEL/TCP-1"/>
</dbReference>
<dbReference type="InterPro" id="IPR027409">
    <property type="entry name" value="GroEL-like_apical_dom_sf"/>
</dbReference>
<dbReference type="InterPro" id="IPR027413">
    <property type="entry name" value="GROEL-like_equatorial_sf"/>
</dbReference>
<dbReference type="InterPro" id="IPR027410">
    <property type="entry name" value="TCP-1-like_intermed_sf"/>
</dbReference>
<dbReference type="NCBIfam" id="TIGR02348">
    <property type="entry name" value="GroEL"/>
    <property type="match status" value="1"/>
</dbReference>
<dbReference type="NCBIfam" id="NF000592">
    <property type="entry name" value="PRK00013.1"/>
    <property type="match status" value="1"/>
</dbReference>
<dbReference type="NCBIfam" id="NF009487">
    <property type="entry name" value="PRK12849.1"/>
    <property type="match status" value="1"/>
</dbReference>
<dbReference type="NCBIfam" id="NF009488">
    <property type="entry name" value="PRK12850.1"/>
    <property type="match status" value="1"/>
</dbReference>
<dbReference type="NCBIfam" id="NF009489">
    <property type="entry name" value="PRK12851.1"/>
    <property type="match status" value="1"/>
</dbReference>
<dbReference type="PANTHER" id="PTHR45633">
    <property type="entry name" value="60 KDA HEAT SHOCK PROTEIN, MITOCHONDRIAL"/>
    <property type="match status" value="1"/>
</dbReference>
<dbReference type="Pfam" id="PF00118">
    <property type="entry name" value="Cpn60_TCP1"/>
    <property type="match status" value="1"/>
</dbReference>
<dbReference type="PRINTS" id="PR00298">
    <property type="entry name" value="CHAPERONIN60"/>
</dbReference>
<dbReference type="SUPFAM" id="SSF52029">
    <property type="entry name" value="GroEL apical domain-like"/>
    <property type="match status" value="1"/>
</dbReference>
<dbReference type="SUPFAM" id="SSF48592">
    <property type="entry name" value="GroEL equatorial domain-like"/>
    <property type="match status" value="1"/>
</dbReference>
<dbReference type="SUPFAM" id="SSF54849">
    <property type="entry name" value="GroEL-intermediate domain like"/>
    <property type="match status" value="1"/>
</dbReference>
<dbReference type="PROSITE" id="PS00296">
    <property type="entry name" value="CHAPERONINS_CPN60"/>
    <property type="match status" value="1"/>
</dbReference>
<proteinExistence type="evidence at protein level"/>
<comment type="function">
    <text evidence="1">Together with its co-chaperonin GroES, plays an essential role in assisting protein folding. The GroEL-GroES system forms a nano-cage that allows encapsulation of the non-native substrate proteins and provides a physical environment optimized to promote and accelerate protein folding.</text>
</comment>
<comment type="catalytic activity">
    <reaction evidence="1">
        <text>ATP + H2O + a folded polypeptide = ADP + phosphate + an unfolded polypeptide.</text>
        <dbReference type="EC" id="5.6.1.7"/>
    </reaction>
</comment>
<comment type="subunit">
    <text evidence="1">Forms a cylinder of 14 subunits composed of two heptameric rings stacked back-to-back. Interacts with the co-chaperonin GroES.</text>
</comment>
<comment type="subcellular location">
    <subcellularLocation>
        <location evidence="1">Cytoplasm</location>
    </subcellularLocation>
</comment>
<comment type="miscellaneous">
    <text>Present in outer membrane vesicle formulations which are used as vaccines in human.</text>
</comment>
<comment type="similarity">
    <text evidence="1">Belongs to the chaperonin (HSP60) family.</text>
</comment>
<keyword id="KW-0067">ATP-binding</keyword>
<keyword id="KW-0143">Chaperone</keyword>
<keyword id="KW-0963">Cytoplasm</keyword>
<keyword id="KW-0413">Isomerase</keyword>
<keyword id="KW-0547">Nucleotide-binding</keyword>
<keyword id="KW-1185">Reference proteome</keyword>
<feature type="chain" id="PRO_0000063460" description="Chaperonin GroEL">
    <location>
        <begin position="1"/>
        <end position="544"/>
    </location>
</feature>
<feature type="binding site" evidence="1">
    <location>
        <begin position="30"/>
        <end position="33"/>
    </location>
    <ligand>
        <name>ATP</name>
        <dbReference type="ChEBI" id="CHEBI:30616"/>
    </ligand>
</feature>
<feature type="binding site" evidence="1">
    <location>
        <position position="51"/>
    </location>
    <ligand>
        <name>ATP</name>
        <dbReference type="ChEBI" id="CHEBI:30616"/>
    </ligand>
</feature>
<feature type="binding site" evidence="1">
    <location>
        <begin position="87"/>
        <end position="91"/>
    </location>
    <ligand>
        <name>ATP</name>
        <dbReference type="ChEBI" id="CHEBI:30616"/>
    </ligand>
</feature>
<feature type="binding site" evidence="1">
    <location>
        <position position="415"/>
    </location>
    <ligand>
        <name>ATP</name>
        <dbReference type="ChEBI" id="CHEBI:30616"/>
    </ligand>
</feature>
<feature type="binding site" evidence="1">
    <location>
        <position position="495"/>
    </location>
    <ligand>
        <name>ATP</name>
        <dbReference type="ChEBI" id="CHEBI:30616"/>
    </ligand>
</feature>
<feature type="sequence conflict" description="In Ref. 1; CAA80532." evidence="2" ref="1">
    <original>D</original>
    <variation>E</variation>
    <location>
        <position position="129"/>
    </location>
</feature>
<feature type="sequence conflict" description="In Ref. 1; CAA80532." evidence="2" ref="1">
    <original>A</original>
    <variation>G</variation>
    <location>
        <position position="214"/>
    </location>
</feature>
<feature type="sequence conflict" description="In Ref. 1; CAA80532." evidence="2" ref="1">
    <original>D</original>
    <variation>E</variation>
    <location>
        <position position="224"/>
    </location>
</feature>
<feature type="sequence conflict" description="In Ref. 1; CAA80532." evidence="2" ref="1">
    <original>Q</original>
    <variation>K</variation>
    <location>
        <position position="239"/>
    </location>
</feature>
<feature type="sequence conflict" description="In Ref. 1; CAA80532." evidence="2" ref="1">
    <original>D</original>
    <variation>N</variation>
    <location>
        <position position="253"/>
    </location>
</feature>
<feature type="sequence conflict" description="In Ref. 1; CAA80532." evidence="2" ref="1">
    <original>V</original>
    <variation>T</variation>
    <location>
        <position position="299"/>
    </location>
</feature>
<feature type="sequence conflict" description="In Ref. 1; CAA80532." evidence="2" ref="1">
    <original>S</original>
    <variation>F</variation>
    <location>
        <position position="308"/>
    </location>
</feature>
<feature type="sequence conflict" description="In Ref. 1; CAA80532." evidence="2" ref="1">
    <original>D</original>
    <variation>N</variation>
    <location>
        <position position="316"/>
    </location>
</feature>
<feature type="sequence conflict" description="In Ref. 1; CAA80532." evidence="2" ref="1">
    <original>V</original>
    <variation>F</variation>
    <location>
        <position position="346"/>
    </location>
</feature>
<feature type="sequence conflict" description="In Ref. 1; CAA80532." evidence="2" ref="1">
    <original>V</original>
    <variation>L</variation>
    <location>
        <position position="396"/>
    </location>
</feature>
<feature type="sequence conflict" description="In Ref. 1; CAA80532." evidence="2" ref="1">
    <original>Q</original>
    <variation>K</variation>
    <location>
        <position position="436"/>
    </location>
</feature>
<feature type="sequence conflict" description="In Ref. 1; CAA80532." evidence="2" ref="1">
    <original>P</original>
    <variation>S</variation>
    <location>
        <position position="450"/>
    </location>
</feature>
<feature type="sequence conflict" description="In Ref. 1; CAA80532." evidence="2" ref="1">
    <original>D</original>
    <variation>N</variation>
    <location>
        <position position="527"/>
    </location>
</feature>
<feature type="sequence conflict" description="In Ref. 1; CAA80532." evidence="2" ref="1">
    <original>V</original>
    <variation>M</variation>
    <location>
        <position position="531"/>
    </location>
</feature>
<evidence type="ECO:0000255" key="1">
    <source>
        <dbReference type="HAMAP-Rule" id="MF_00600"/>
    </source>
</evidence>
<evidence type="ECO:0000305" key="2"/>
<accession>P42385</accession>
<gene>
    <name evidence="1" type="primary">groEL</name>
    <name evidence="1" type="synonym">groL</name>
    <name type="synonym">hsp63</name>
    <name type="synonym">mopA</name>
    <name type="ordered locus">NMB1972</name>
</gene>
<organism>
    <name type="scientific">Neisseria meningitidis serogroup B (strain ATCC BAA-335 / MC58)</name>
    <dbReference type="NCBI Taxonomy" id="122586"/>
    <lineage>
        <taxon>Bacteria</taxon>
        <taxon>Pseudomonadati</taxon>
        <taxon>Pseudomonadota</taxon>
        <taxon>Betaproteobacteria</taxon>
        <taxon>Neisseriales</taxon>
        <taxon>Neisseriaceae</taxon>
        <taxon>Neisseria</taxon>
    </lineage>
</organism>
<protein>
    <recommendedName>
        <fullName evidence="1">Chaperonin GroEL</fullName>
        <ecNumber evidence="1">5.6.1.7</ecNumber>
    </recommendedName>
    <alternativeName>
        <fullName evidence="1">60 kDa chaperonin</fullName>
    </alternativeName>
    <alternativeName>
        <fullName>63 kDa stress protein</fullName>
    </alternativeName>
    <alternativeName>
        <fullName evidence="1">Chaperonin-60</fullName>
        <shortName evidence="1">Cpn60</shortName>
    </alternativeName>
    <alternativeName>
        <fullName>GSP63</fullName>
    </alternativeName>
    <alternativeName>
        <fullName>HSP60</fullName>
    </alternativeName>
</protein>